<dbReference type="EC" id="2.7.2.3" evidence="1"/>
<dbReference type="EMBL" id="CP000407">
    <property type="protein sequence ID" value="ABP89127.1"/>
    <property type="molecule type" value="Genomic_DNA"/>
</dbReference>
<dbReference type="SMR" id="A4VSN8"/>
<dbReference type="STRING" id="391295.SSU05_0157"/>
<dbReference type="KEGG" id="ssu:SSU05_0157"/>
<dbReference type="eggNOG" id="COG0126">
    <property type="taxonomic scope" value="Bacteria"/>
</dbReference>
<dbReference type="HOGENOM" id="CLU_025427_0_1_9"/>
<dbReference type="UniPathway" id="UPA00109">
    <property type="reaction ID" value="UER00185"/>
</dbReference>
<dbReference type="GO" id="GO:0005829">
    <property type="term" value="C:cytosol"/>
    <property type="evidence" value="ECO:0007669"/>
    <property type="project" value="TreeGrafter"/>
</dbReference>
<dbReference type="GO" id="GO:0043531">
    <property type="term" value="F:ADP binding"/>
    <property type="evidence" value="ECO:0007669"/>
    <property type="project" value="TreeGrafter"/>
</dbReference>
<dbReference type="GO" id="GO:0005524">
    <property type="term" value="F:ATP binding"/>
    <property type="evidence" value="ECO:0007669"/>
    <property type="project" value="UniProtKB-KW"/>
</dbReference>
<dbReference type="GO" id="GO:0004618">
    <property type="term" value="F:phosphoglycerate kinase activity"/>
    <property type="evidence" value="ECO:0007669"/>
    <property type="project" value="UniProtKB-UniRule"/>
</dbReference>
<dbReference type="GO" id="GO:0006094">
    <property type="term" value="P:gluconeogenesis"/>
    <property type="evidence" value="ECO:0007669"/>
    <property type="project" value="TreeGrafter"/>
</dbReference>
<dbReference type="GO" id="GO:0006096">
    <property type="term" value="P:glycolytic process"/>
    <property type="evidence" value="ECO:0007669"/>
    <property type="project" value="UniProtKB-UniRule"/>
</dbReference>
<dbReference type="FunFam" id="3.40.50.1260:FF:000001">
    <property type="entry name" value="Phosphoglycerate kinase"/>
    <property type="match status" value="1"/>
</dbReference>
<dbReference type="FunFam" id="3.40.50.1260:FF:000008">
    <property type="entry name" value="Phosphoglycerate kinase"/>
    <property type="match status" value="1"/>
</dbReference>
<dbReference type="Gene3D" id="3.40.50.1260">
    <property type="entry name" value="Phosphoglycerate kinase, N-terminal domain"/>
    <property type="match status" value="2"/>
</dbReference>
<dbReference type="HAMAP" id="MF_00145">
    <property type="entry name" value="Phosphoglyc_kinase"/>
    <property type="match status" value="1"/>
</dbReference>
<dbReference type="InterPro" id="IPR001576">
    <property type="entry name" value="Phosphoglycerate_kinase"/>
</dbReference>
<dbReference type="InterPro" id="IPR015911">
    <property type="entry name" value="Phosphoglycerate_kinase_CS"/>
</dbReference>
<dbReference type="InterPro" id="IPR015824">
    <property type="entry name" value="Phosphoglycerate_kinase_N"/>
</dbReference>
<dbReference type="InterPro" id="IPR036043">
    <property type="entry name" value="Phosphoglycerate_kinase_sf"/>
</dbReference>
<dbReference type="PANTHER" id="PTHR11406">
    <property type="entry name" value="PHOSPHOGLYCERATE KINASE"/>
    <property type="match status" value="1"/>
</dbReference>
<dbReference type="PANTHER" id="PTHR11406:SF23">
    <property type="entry name" value="PHOSPHOGLYCERATE KINASE 1, CHLOROPLASTIC-RELATED"/>
    <property type="match status" value="1"/>
</dbReference>
<dbReference type="Pfam" id="PF00162">
    <property type="entry name" value="PGK"/>
    <property type="match status" value="1"/>
</dbReference>
<dbReference type="PIRSF" id="PIRSF000724">
    <property type="entry name" value="Pgk"/>
    <property type="match status" value="1"/>
</dbReference>
<dbReference type="PRINTS" id="PR00477">
    <property type="entry name" value="PHGLYCKINASE"/>
</dbReference>
<dbReference type="SUPFAM" id="SSF53748">
    <property type="entry name" value="Phosphoglycerate kinase"/>
    <property type="match status" value="1"/>
</dbReference>
<dbReference type="PROSITE" id="PS00111">
    <property type="entry name" value="PGLYCERATE_KINASE"/>
    <property type="match status" value="1"/>
</dbReference>
<gene>
    <name evidence="1" type="primary">pgk</name>
    <name type="ordered locus">SSU05_0157</name>
</gene>
<name>PGK_STRSY</name>
<proteinExistence type="inferred from homology"/>
<evidence type="ECO:0000255" key="1">
    <source>
        <dbReference type="HAMAP-Rule" id="MF_00145"/>
    </source>
</evidence>
<organism>
    <name type="scientific">Streptococcus suis (strain 05ZYH33)</name>
    <dbReference type="NCBI Taxonomy" id="391295"/>
    <lineage>
        <taxon>Bacteria</taxon>
        <taxon>Bacillati</taxon>
        <taxon>Bacillota</taxon>
        <taxon>Bacilli</taxon>
        <taxon>Lactobacillales</taxon>
        <taxon>Streptococcaceae</taxon>
        <taxon>Streptococcus</taxon>
    </lineage>
</organism>
<sequence>MAKLTVKDVELKGKKVLVRVDFNVPLKDGVITNDNRITAALPTIKYILEQGGRAILFSHLGRVKEEADKEGKSLAPVAADLAAKLGQDVAFIAGATRGAELEAAINALEDGQVLLVENTRFEDVDGKKESKNDEELGKYWASLGDGIFVNDAFGTAHRSHASNVGISANVEKAVAGFLLENEIAYIQEAVETPERPFVAILGGSKVSDKIGVIENLLEKADKVLIGGGMTYTFYKAQGIEIGNSLVEEDKLDVAKTLLEKANGKLILPVDSKEANAFAGYTEVRDTDGEAVSEGFLGLDIGPKSIAKFDEALTGAKTVVWNGPMGVFENPDFQAGTIGVMDAIVKQPGVKSIIGGGDSAAAAINLGRADKFSWISTGGGASMELLEGKVLPGLAALTEK</sequence>
<feature type="chain" id="PRO_1000009662" description="Phosphoglycerate kinase">
    <location>
        <begin position="1"/>
        <end position="399"/>
    </location>
</feature>
<feature type="binding site" evidence="1">
    <location>
        <begin position="21"/>
        <end position="23"/>
    </location>
    <ligand>
        <name>substrate</name>
    </ligand>
</feature>
<feature type="binding site" evidence="1">
    <location>
        <position position="36"/>
    </location>
    <ligand>
        <name>substrate</name>
    </ligand>
</feature>
<feature type="binding site" evidence="1">
    <location>
        <begin position="59"/>
        <end position="62"/>
    </location>
    <ligand>
        <name>substrate</name>
    </ligand>
</feature>
<feature type="binding site" evidence="1">
    <location>
        <position position="120"/>
    </location>
    <ligand>
        <name>substrate</name>
    </ligand>
</feature>
<feature type="binding site" evidence="1">
    <location>
        <position position="158"/>
    </location>
    <ligand>
        <name>substrate</name>
    </ligand>
</feature>
<feature type="binding site" evidence="1">
    <location>
        <position position="209"/>
    </location>
    <ligand>
        <name>ATP</name>
        <dbReference type="ChEBI" id="CHEBI:30616"/>
    </ligand>
</feature>
<feature type="binding site" evidence="1">
    <location>
        <position position="297"/>
    </location>
    <ligand>
        <name>ATP</name>
        <dbReference type="ChEBI" id="CHEBI:30616"/>
    </ligand>
</feature>
<feature type="binding site" evidence="1">
    <location>
        <position position="328"/>
    </location>
    <ligand>
        <name>ATP</name>
        <dbReference type="ChEBI" id="CHEBI:30616"/>
    </ligand>
</feature>
<feature type="binding site" evidence="1">
    <location>
        <begin position="355"/>
        <end position="358"/>
    </location>
    <ligand>
        <name>ATP</name>
        <dbReference type="ChEBI" id="CHEBI:30616"/>
    </ligand>
</feature>
<protein>
    <recommendedName>
        <fullName evidence="1">Phosphoglycerate kinase</fullName>
        <ecNumber evidence="1">2.7.2.3</ecNumber>
    </recommendedName>
</protein>
<comment type="catalytic activity">
    <reaction evidence="1">
        <text>(2R)-3-phosphoglycerate + ATP = (2R)-3-phospho-glyceroyl phosphate + ADP</text>
        <dbReference type="Rhea" id="RHEA:14801"/>
        <dbReference type="ChEBI" id="CHEBI:30616"/>
        <dbReference type="ChEBI" id="CHEBI:57604"/>
        <dbReference type="ChEBI" id="CHEBI:58272"/>
        <dbReference type="ChEBI" id="CHEBI:456216"/>
        <dbReference type="EC" id="2.7.2.3"/>
    </reaction>
</comment>
<comment type="pathway">
    <text evidence="1">Carbohydrate degradation; glycolysis; pyruvate from D-glyceraldehyde 3-phosphate: step 2/5.</text>
</comment>
<comment type="subunit">
    <text evidence="1">Monomer.</text>
</comment>
<comment type="subcellular location">
    <subcellularLocation>
        <location evidence="1">Cytoplasm</location>
    </subcellularLocation>
</comment>
<comment type="similarity">
    <text evidence="1">Belongs to the phosphoglycerate kinase family.</text>
</comment>
<keyword id="KW-0067">ATP-binding</keyword>
<keyword id="KW-0963">Cytoplasm</keyword>
<keyword id="KW-0324">Glycolysis</keyword>
<keyword id="KW-0418">Kinase</keyword>
<keyword id="KW-0547">Nucleotide-binding</keyword>
<keyword id="KW-0808">Transferase</keyword>
<accession>A4VSN8</accession>
<reference key="1">
    <citation type="journal article" date="2007" name="PLoS ONE">
        <title>A glimpse of streptococcal toxic shock syndrome from comparative genomics of S. suis 2 Chinese isolates.</title>
        <authorList>
            <person name="Chen C."/>
            <person name="Tang J."/>
            <person name="Dong W."/>
            <person name="Wang C."/>
            <person name="Feng Y."/>
            <person name="Wang J."/>
            <person name="Zheng F."/>
            <person name="Pan X."/>
            <person name="Liu D."/>
            <person name="Li M."/>
            <person name="Song Y."/>
            <person name="Zhu X."/>
            <person name="Sun H."/>
            <person name="Feng T."/>
            <person name="Guo Z."/>
            <person name="Ju A."/>
            <person name="Ge J."/>
            <person name="Dong Y."/>
            <person name="Sun W."/>
            <person name="Jiang Y."/>
            <person name="Wang J."/>
            <person name="Yan J."/>
            <person name="Yang H."/>
            <person name="Wang X."/>
            <person name="Gao G.F."/>
            <person name="Yang R."/>
            <person name="Wang J."/>
            <person name="Yu J."/>
        </authorList>
    </citation>
    <scope>NUCLEOTIDE SEQUENCE [LARGE SCALE GENOMIC DNA]</scope>
    <source>
        <strain>05ZYH33</strain>
    </source>
</reference>